<comment type="function">
    <text evidence="1">Specifically methylates the pseudouridine at position 1915 (m3Psi1915) in 23S rRNA.</text>
</comment>
<comment type="catalytic activity">
    <reaction evidence="1">
        <text>pseudouridine(1915) in 23S rRNA + S-adenosyl-L-methionine = N(3)-methylpseudouridine(1915) in 23S rRNA + S-adenosyl-L-homocysteine + H(+)</text>
        <dbReference type="Rhea" id="RHEA:42752"/>
        <dbReference type="Rhea" id="RHEA-COMP:10221"/>
        <dbReference type="Rhea" id="RHEA-COMP:10222"/>
        <dbReference type="ChEBI" id="CHEBI:15378"/>
        <dbReference type="ChEBI" id="CHEBI:57856"/>
        <dbReference type="ChEBI" id="CHEBI:59789"/>
        <dbReference type="ChEBI" id="CHEBI:65314"/>
        <dbReference type="ChEBI" id="CHEBI:74486"/>
        <dbReference type="EC" id="2.1.1.177"/>
    </reaction>
</comment>
<comment type="subunit">
    <text evidence="1">Homodimer.</text>
</comment>
<comment type="subcellular location">
    <subcellularLocation>
        <location evidence="1">Cytoplasm</location>
    </subcellularLocation>
</comment>
<comment type="similarity">
    <text evidence="1">Belongs to the RNA methyltransferase RlmH family.</text>
</comment>
<feature type="chain" id="PRO_0000366614" description="Ribosomal RNA large subunit methyltransferase H">
    <location>
        <begin position="1"/>
        <end position="159"/>
    </location>
</feature>
<feature type="binding site" evidence="1">
    <location>
        <position position="76"/>
    </location>
    <ligand>
        <name>S-adenosyl-L-methionine</name>
        <dbReference type="ChEBI" id="CHEBI:59789"/>
    </ligand>
</feature>
<feature type="binding site" evidence="1">
    <location>
        <position position="108"/>
    </location>
    <ligand>
        <name>S-adenosyl-L-methionine</name>
        <dbReference type="ChEBI" id="CHEBI:59789"/>
    </ligand>
</feature>
<reference key="1">
    <citation type="journal article" date="2008" name="DNA Res.">
        <title>Comparative genome analysis of Lactobacillus reuteri and Lactobacillus fermentum reveal a genomic island for reuterin and cobalamin production.</title>
        <authorList>
            <person name="Morita H."/>
            <person name="Toh H."/>
            <person name="Fukuda S."/>
            <person name="Horikawa H."/>
            <person name="Oshima K."/>
            <person name="Suzuki T."/>
            <person name="Murakami M."/>
            <person name="Hisamatsu S."/>
            <person name="Kato Y."/>
            <person name="Takizawa T."/>
            <person name="Fukuoka H."/>
            <person name="Yoshimura T."/>
            <person name="Itoh K."/>
            <person name="O'Sullivan D.J."/>
            <person name="McKay L.L."/>
            <person name="Ohno H."/>
            <person name="Kikuchi J."/>
            <person name="Masaoka T."/>
            <person name="Hattori M."/>
        </authorList>
    </citation>
    <scope>NUCLEOTIDE SEQUENCE [LARGE SCALE GENOMIC DNA]</scope>
    <source>
        <strain>NBRC 3956 / LMG 18251</strain>
    </source>
</reference>
<protein>
    <recommendedName>
        <fullName evidence="1">Ribosomal RNA large subunit methyltransferase H</fullName>
        <ecNumber evidence="1">2.1.1.177</ecNumber>
    </recommendedName>
    <alternativeName>
        <fullName evidence="1">23S rRNA (pseudouridine1915-N3)-methyltransferase</fullName>
    </alternativeName>
    <alternativeName>
        <fullName evidence="1">23S rRNA m3Psi1915 methyltransferase</fullName>
    </alternativeName>
    <alternativeName>
        <fullName evidence="1">rRNA (pseudouridine-N3-)-methyltransferase RlmH</fullName>
    </alternativeName>
</protein>
<dbReference type="EC" id="2.1.1.177" evidence="1"/>
<dbReference type="EMBL" id="AP008937">
    <property type="protein sequence ID" value="BAG26357.1"/>
    <property type="molecule type" value="Genomic_DNA"/>
</dbReference>
<dbReference type="RefSeq" id="WP_003682318.1">
    <property type="nucleotide sequence ID" value="NC_010610.1"/>
</dbReference>
<dbReference type="SMR" id="B2GEW8"/>
<dbReference type="GeneID" id="83715683"/>
<dbReference type="KEGG" id="lfe:LAF_0021"/>
<dbReference type="eggNOG" id="COG1576">
    <property type="taxonomic scope" value="Bacteria"/>
</dbReference>
<dbReference type="HOGENOM" id="CLU_100552_0_0_9"/>
<dbReference type="Proteomes" id="UP000001697">
    <property type="component" value="Chromosome"/>
</dbReference>
<dbReference type="GO" id="GO:0005737">
    <property type="term" value="C:cytoplasm"/>
    <property type="evidence" value="ECO:0007669"/>
    <property type="project" value="UniProtKB-SubCell"/>
</dbReference>
<dbReference type="GO" id="GO:0070038">
    <property type="term" value="F:rRNA (pseudouridine-N3-)-methyltransferase activity"/>
    <property type="evidence" value="ECO:0007669"/>
    <property type="project" value="UniProtKB-UniRule"/>
</dbReference>
<dbReference type="CDD" id="cd18081">
    <property type="entry name" value="RlmH-like"/>
    <property type="match status" value="1"/>
</dbReference>
<dbReference type="Gene3D" id="3.40.1280.10">
    <property type="match status" value="1"/>
</dbReference>
<dbReference type="HAMAP" id="MF_00658">
    <property type="entry name" value="23SrRNA_methyltr_H"/>
    <property type="match status" value="1"/>
</dbReference>
<dbReference type="InterPro" id="IPR029028">
    <property type="entry name" value="Alpha/beta_knot_MTases"/>
</dbReference>
<dbReference type="InterPro" id="IPR003742">
    <property type="entry name" value="RlmH-like"/>
</dbReference>
<dbReference type="InterPro" id="IPR029026">
    <property type="entry name" value="tRNA_m1G_MTases_N"/>
</dbReference>
<dbReference type="NCBIfam" id="NF000985">
    <property type="entry name" value="PRK00103.1-3"/>
    <property type="match status" value="1"/>
</dbReference>
<dbReference type="NCBIfam" id="TIGR00246">
    <property type="entry name" value="tRNA_RlmH_YbeA"/>
    <property type="match status" value="1"/>
</dbReference>
<dbReference type="PANTHER" id="PTHR33603">
    <property type="entry name" value="METHYLTRANSFERASE"/>
    <property type="match status" value="1"/>
</dbReference>
<dbReference type="PANTHER" id="PTHR33603:SF1">
    <property type="entry name" value="RIBOSOMAL RNA LARGE SUBUNIT METHYLTRANSFERASE H"/>
    <property type="match status" value="1"/>
</dbReference>
<dbReference type="Pfam" id="PF02590">
    <property type="entry name" value="SPOUT_MTase"/>
    <property type="match status" value="1"/>
</dbReference>
<dbReference type="PIRSF" id="PIRSF004505">
    <property type="entry name" value="MT_bac"/>
    <property type="match status" value="1"/>
</dbReference>
<dbReference type="SUPFAM" id="SSF75217">
    <property type="entry name" value="alpha/beta knot"/>
    <property type="match status" value="1"/>
</dbReference>
<evidence type="ECO:0000255" key="1">
    <source>
        <dbReference type="HAMAP-Rule" id="MF_00658"/>
    </source>
</evidence>
<gene>
    <name evidence="1" type="primary">rlmH</name>
    <name type="ordered locus">LAF_0021</name>
</gene>
<keyword id="KW-0963">Cytoplasm</keyword>
<keyword id="KW-0489">Methyltransferase</keyword>
<keyword id="KW-1185">Reference proteome</keyword>
<keyword id="KW-0698">rRNA processing</keyword>
<keyword id="KW-0949">S-adenosyl-L-methionine</keyword>
<keyword id="KW-0808">Transferase</keyword>
<accession>B2GEW8</accession>
<name>RLMH_LIMF3</name>
<sequence length="159" mass="17986">MNIKIIGVGKVKEKYFKAGIAEYAKRMERYAKFEIVEVPDEKAPETLSQAEMDAVMAKEGERILAKIKDREYVYALAIKGKERSSEEFAKEINQLATYGHSDITFVIGGSLGLSPAVLKRANTQISFGRFTLPHKLMRLVLAEQIYRAFTIINGLPYHK</sequence>
<proteinExistence type="inferred from homology"/>
<organism>
    <name type="scientific">Limosilactobacillus fermentum (strain NBRC 3956 / LMG 18251)</name>
    <name type="common">Lactobacillus fermentum</name>
    <dbReference type="NCBI Taxonomy" id="334390"/>
    <lineage>
        <taxon>Bacteria</taxon>
        <taxon>Bacillati</taxon>
        <taxon>Bacillota</taxon>
        <taxon>Bacilli</taxon>
        <taxon>Lactobacillales</taxon>
        <taxon>Lactobacillaceae</taxon>
        <taxon>Limosilactobacillus</taxon>
    </lineage>
</organism>